<sequence>MAESTTAVGHDELAALKFVALEGAHSEPIKISCSELSDRLDASSQTASRRLQRLEAAGYLDRDVVTDGQWVSLTKAGETALHKEYTQYQEIFGDNSSVVELTGTVTSGMGEGRHYISLSGYMKQFRERLGYEPFPGTLNIDLDDDSTRTRVAVSSLTGIQIDGWEDDERTFGPATCYPAEIILAEQTAEAAHIIVPERTHHDETQLEVIAPERLRDSLELTDGQRITVQLKPKE</sequence>
<reference key="1">
    <citation type="journal article" date="2006" name="BMC Genomics">
        <title>The genome of the square archaeon Haloquadratum walsbyi: life at the limits of water activity.</title>
        <authorList>
            <person name="Bolhuis H."/>
            <person name="Palm P."/>
            <person name="Wende A."/>
            <person name="Falb M."/>
            <person name="Rampp M."/>
            <person name="Rodriguez-Valera F."/>
            <person name="Pfeiffer F."/>
            <person name="Oesterhelt D."/>
        </authorList>
    </citation>
    <scope>NUCLEOTIDE SEQUENCE [LARGE SCALE GENOMIC DNA]</scope>
    <source>
        <strain>DSM 16790 / HBSQ001</strain>
    </source>
</reference>
<evidence type="ECO:0000250" key="1"/>
<evidence type="ECO:0000305" key="2"/>
<feature type="chain" id="PRO_0000322086" description="Riboflavin kinase">
    <location>
        <begin position="1"/>
        <end position="234"/>
    </location>
</feature>
<feature type="region of interest" description="H-T-H motif-like">
    <location>
        <begin position="1"/>
        <end position="98"/>
    </location>
</feature>
<feature type="region of interest" description="Riboflavin kinase">
    <location>
        <begin position="99"/>
        <end position="234"/>
    </location>
</feature>
<feature type="binding site" evidence="1">
    <location>
        <begin position="108"/>
        <end position="113"/>
    </location>
    <ligand>
        <name>CDP</name>
        <dbReference type="ChEBI" id="CHEBI:58069"/>
    </ligand>
</feature>
<feature type="binding site" evidence="1">
    <location>
        <position position="137"/>
    </location>
    <ligand>
        <name>Mg(2+)</name>
        <dbReference type="ChEBI" id="CHEBI:18420"/>
    </ligand>
</feature>
<feature type="binding site" evidence="1">
    <location>
        <position position="139"/>
    </location>
    <ligand>
        <name>Mg(2+)</name>
        <dbReference type="ChEBI" id="CHEBI:18420"/>
    </ligand>
</feature>
<feature type="binding site" evidence="1">
    <location>
        <position position="199"/>
    </location>
    <ligand>
        <name>FMN</name>
        <dbReference type="ChEBI" id="CHEBI:58210"/>
    </ligand>
</feature>
<feature type="binding site" evidence="1">
    <location>
        <position position="207"/>
    </location>
    <ligand>
        <name>FMN</name>
        <dbReference type="ChEBI" id="CHEBI:58210"/>
    </ligand>
</feature>
<feature type="binding site" evidence="1">
    <location>
        <begin position="212"/>
        <end position="215"/>
    </location>
    <ligand>
        <name>CDP</name>
        <dbReference type="ChEBI" id="CHEBI:58069"/>
    </ligand>
</feature>
<gene>
    <name type="primary">ribK</name>
    <name type="ordered locus">HQ_3236A</name>
</gene>
<organism>
    <name type="scientific">Haloquadratum walsbyi (strain DSM 16790 / HBSQ001)</name>
    <dbReference type="NCBI Taxonomy" id="362976"/>
    <lineage>
        <taxon>Archaea</taxon>
        <taxon>Methanobacteriati</taxon>
        <taxon>Methanobacteriota</taxon>
        <taxon>Stenosarchaea group</taxon>
        <taxon>Halobacteria</taxon>
        <taxon>Halobacteriales</taxon>
        <taxon>Haloferacaceae</taxon>
        <taxon>Haloquadratum</taxon>
    </lineage>
</organism>
<comment type="function">
    <text evidence="1">Catalyzes the CTP-dependent phosphorylation of riboflavin (vitamin B2) to form flavin mononucleotide (FMN).</text>
</comment>
<comment type="catalytic activity">
    <reaction>
        <text>riboflavin + CTP = CDP + FMN + H(+)</text>
        <dbReference type="Rhea" id="RHEA:25021"/>
        <dbReference type="ChEBI" id="CHEBI:15378"/>
        <dbReference type="ChEBI" id="CHEBI:37563"/>
        <dbReference type="ChEBI" id="CHEBI:57986"/>
        <dbReference type="ChEBI" id="CHEBI:58069"/>
        <dbReference type="ChEBI" id="CHEBI:58210"/>
        <dbReference type="EC" id="2.7.1.161"/>
    </reaction>
</comment>
<comment type="cofactor">
    <cofactor evidence="1">
        <name>Mg(2+)</name>
        <dbReference type="ChEBI" id="CHEBI:18420"/>
    </cofactor>
    <text evidence="1">Binds 1 Mg(2+) ion per subunit.</text>
</comment>
<comment type="pathway">
    <text>Cofactor biosynthesis; FMN biosynthesis; FMN from riboflavin (CTP route): step 1/1.</text>
</comment>
<comment type="similarity">
    <text evidence="2">Belongs to the archaeal riboflavin kinase family.</text>
</comment>
<proteinExistence type="inferred from homology"/>
<protein>
    <recommendedName>
        <fullName>Riboflavin kinase</fullName>
        <shortName>RFK</shortName>
        <ecNumber>2.7.1.161</ecNumber>
    </recommendedName>
    <alternativeName>
        <fullName>CTP-dependent riboflavin kinase</fullName>
    </alternativeName>
    <alternativeName>
        <fullName>CTP:riboflavin 5'-phosphotransferase</fullName>
    </alternativeName>
    <alternativeName>
        <fullName>Flavokinase</fullName>
    </alternativeName>
</protein>
<accession>Q18FC4</accession>
<keyword id="KW-0285">Flavoprotein</keyword>
<keyword id="KW-0288">FMN</keyword>
<keyword id="KW-0418">Kinase</keyword>
<keyword id="KW-0460">Magnesium</keyword>
<keyword id="KW-0479">Metal-binding</keyword>
<keyword id="KW-0547">Nucleotide-binding</keyword>
<keyword id="KW-1185">Reference proteome</keyword>
<keyword id="KW-0808">Transferase</keyword>
<name>RIFK_HALWD</name>
<dbReference type="EC" id="2.7.1.161"/>
<dbReference type="EMBL" id="AM180088">
    <property type="protein sequence ID" value="CAJ53334.1"/>
    <property type="molecule type" value="Genomic_DNA"/>
</dbReference>
<dbReference type="RefSeq" id="WP_011572439.1">
    <property type="nucleotide sequence ID" value="NC_008212.1"/>
</dbReference>
<dbReference type="SMR" id="Q18FC4"/>
<dbReference type="STRING" id="362976.HQ_3236A"/>
<dbReference type="GeneID" id="4193356"/>
<dbReference type="KEGG" id="hwa:HQ_3236A"/>
<dbReference type="eggNOG" id="arCOG01904">
    <property type="taxonomic scope" value="Archaea"/>
</dbReference>
<dbReference type="HOGENOM" id="CLU_088476_0_0_2"/>
<dbReference type="UniPathway" id="UPA00276">
    <property type="reaction ID" value="UER00929"/>
</dbReference>
<dbReference type="Proteomes" id="UP000001975">
    <property type="component" value="Chromosome"/>
</dbReference>
<dbReference type="GO" id="GO:0003700">
    <property type="term" value="F:DNA-binding transcription factor activity"/>
    <property type="evidence" value="ECO:0007669"/>
    <property type="project" value="InterPro"/>
</dbReference>
<dbReference type="GO" id="GO:0000287">
    <property type="term" value="F:magnesium ion binding"/>
    <property type="evidence" value="ECO:0007669"/>
    <property type="project" value="UniProtKB-UniRule"/>
</dbReference>
<dbReference type="GO" id="GO:0000166">
    <property type="term" value="F:nucleotide binding"/>
    <property type="evidence" value="ECO:0007669"/>
    <property type="project" value="UniProtKB-UniRule"/>
</dbReference>
<dbReference type="GO" id="GO:0008531">
    <property type="term" value="F:riboflavin kinase activity"/>
    <property type="evidence" value="ECO:0007669"/>
    <property type="project" value="InterPro"/>
</dbReference>
<dbReference type="GO" id="GO:0009398">
    <property type="term" value="P:FMN biosynthetic process"/>
    <property type="evidence" value="ECO:0007669"/>
    <property type="project" value="UniProtKB-UniRule"/>
</dbReference>
<dbReference type="GO" id="GO:0009231">
    <property type="term" value="P:riboflavin biosynthetic process"/>
    <property type="evidence" value="ECO:0007669"/>
    <property type="project" value="InterPro"/>
</dbReference>
<dbReference type="CDD" id="cd00090">
    <property type="entry name" value="HTH_ARSR"/>
    <property type="match status" value="1"/>
</dbReference>
<dbReference type="Gene3D" id="2.40.30.30">
    <property type="entry name" value="Riboflavin kinase-like"/>
    <property type="match status" value="1"/>
</dbReference>
<dbReference type="Gene3D" id="1.10.10.10">
    <property type="entry name" value="Winged helix-like DNA-binding domain superfamily/Winged helix DNA-binding domain"/>
    <property type="match status" value="1"/>
</dbReference>
<dbReference type="HAMAP" id="MF_01285">
    <property type="entry name" value="Riboflavin_kinase"/>
    <property type="match status" value="1"/>
</dbReference>
<dbReference type="InterPro" id="IPR011991">
    <property type="entry name" value="ArsR-like_HTH"/>
</dbReference>
<dbReference type="InterPro" id="IPR000835">
    <property type="entry name" value="HTH_MarR-typ"/>
</dbReference>
<dbReference type="InterPro" id="IPR039063">
    <property type="entry name" value="RibK_CTP-dep"/>
</dbReference>
<dbReference type="InterPro" id="IPR023470">
    <property type="entry name" value="Riboflavin_kinase_archaeal"/>
</dbReference>
<dbReference type="InterPro" id="IPR023602">
    <property type="entry name" value="Riboflavin_kinase_CTP-dep"/>
</dbReference>
<dbReference type="InterPro" id="IPR023465">
    <property type="entry name" value="Riboflavin_kinase_dom_sf"/>
</dbReference>
<dbReference type="InterPro" id="IPR036388">
    <property type="entry name" value="WH-like_DNA-bd_sf"/>
</dbReference>
<dbReference type="InterPro" id="IPR036390">
    <property type="entry name" value="WH_DNA-bd_sf"/>
</dbReference>
<dbReference type="PANTHER" id="PTHR40706">
    <property type="entry name" value="RIBOFLAVIN KINASE"/>
    <property type="match status" value="1"/>
</dbReference>
<dbReference type="PANTHER" id="PTHR40706:SF1">
    <property type="entry name" value="RIBOFLAVIN KINASE"/>
    <property type="match status" value="1"/>
</dbReference>
<dbReference type="Pfam" id="PF01982">
    <property type="entry name" value="CTP-dep_RFKase"/>
    <property type="match status" value="1"/>
</dbReference>
<dbReference type="Pfam" id="PF12802">
    <property type="entry name" value="MarR_2"/>
    <property type="match status" value="1"/>
</dbReference>
<dbReference type="SUPFAM" id="SSF82114">
    <property type="entry name" value="Riboflavin kinase-like"/>
    <property type="match status" value="1"/>
</dbReference>
<dbReference type="SUPFAM" id="SSF46785">
    <property type="entry name" value="Winged helix' DNA-binding domain"/>
    <property type="match status" value="1"/>
</dbReference>